<dbReference type="SMR" id="P0DSM5"/>
<dbReference type="GO" id="GO:0005576">
    <property type="term" value="C:extracellular region"/>
    <property type="evidence" value="ECO:0007669"/>
    <property type="project" value="UniProtKB-SubCell"/>
</dbReference>
<dbReference type="GO" id="GO:0016020">
    <property type="term" value="C:membrane"/>
    <property type="evidence" value="ECO:0007669"/>
    <property type="project" value="UniProtKB-KW"/>
</dbReference>
<dbReference type="GO" id="GO:0044218">
    <property type="term" value="C:other organism cell membrane"/>
    <property type="evidence" value="ECO:0007669"/>
    <property type="project" value="UniProtKB-KW"/>
</dbReference>
<dbReference type="GO" id="GO:0090729">
    <property type="term" value="F:toxin activity"/>
    <property type="evidence" value="ECO:0007669"/>
    <property type="project" value="UniProtKB-KW"/>
</dbReference>
<dbReference type="GO" id="GO:0042742">
    <property type="term" value="P:defense response to bacterium"/>
    <property type="evidence" value="ECO:0007669"/>
    <property type="project" value="UniProtKB-KW"/>
</dbReference>
<dbReference type="GO" id="GO:0050832">
    <property type="term" value="P:defense response to fungus"/>
    <property type="evidence" value="ECO:0007669"/>
    <property type="project" value="UniProtKB-KW"/>
</dbReference>
<dbReference type="GO" id="GO:0031640">
    <property type="term" value="P:killing of cells of another organism"/>
    <property type="evidence" value="ECO:0007669"/>
    <property type="project" value="UniProtKB-KW"/>
</dbReference>
<dbReference type="InterPro" id="IPR012523">
    <property type="entry name" value="Antimicrobial_4"/>
</dbReference>
<dbReference type="Pfam" id="PF08024">
    <property type="entry name" value="Antimicrobial_4"/>
    <property type="match status" value="1"/>
</dbReference>
<name>WTX1B_NEOIV</name>
<keyword id="KW-0044">Antibiotic</keyword>
<keyword id="KW-0929">Antimicrobial</keyword>
<keyword id="KW-0903">Direct protein sequencing</keyword>
<keyword id="KW-0295">Fungicide</keyword>
<keyword id="KW-0472">Membrane</keyword>
<keyword id="KW-0964">Secreted</keyword>
<keyword id="KW-1052">Target cell membrane</keyword>
<keyword id="KW-1053">Target membrane</keyword>
<keyword id="KW-0800">Toxin</keyword>
<proteinExistence type="evidence at protein level"/>
<evidence type="ECO:0000250" key="1">
    <source>
        <dbReference type="UniProtKB" id="P82427"/>
    </source>
</evidence>
<evidence type="ECO:0000303" key="2">
    <source>
    </source>
</evidence>
<evidence type="ECO:0000303" key="3">
    <source>
    </source>
</evidence>
<evidence type="ECO:0000305" key="4"/>
<evidence type="ECO:0000305" key="5">
    <source>
    </source>
</evidence>
<sequence>FLWGALIKGAGKLISRVVGSLKKKKQ</sequence>
<organism>
    <name type="scientific">Neoponera inversa</name>
    <name type="common">Ant</name>
    <name type="synonym">Ponera inversa</name>
    <dbReference type="NCBI Taxonomy" id="264722"/>
    <lineage>
        <taxon>Eukaryota</taxon>
        <taxon>Metazoa</taxon>
        <taxon>Ecdysozoa</taxon>
        <taxon>Arthropoda</taxon>
        <taxon>Hexapoda</taxon>
        <taxon>Insecta</taxon>
        <taxon>Pterygota</taxon>
        <taxon>Neoptera</taxon>
        <taxon>Endopterygota</taxon>
        <taxon>Hymenoptera</taxon>
        <taxon>Apocrita</taxon>
        <taxon>Aculeata</taxon>
        <taxon>Formicoidea</taxon>
        <taxon>Formicidae</taxon>
        <taxon>Ponerinae</taxon>
        <taxon>Ponerini</taxon>
        <taxon>Neoponera</taxon>
    </lineage>
</organism>
<reference key="1">
    <citation type="journal article" date="2014" name="Toxicon">
        <title>Diversity of peptide toxins from stinging ant venoms.</title>
        <authorList>
            <person name="Aili S.R."/>
            <person name="Touchard A."/>
            <person name="Escoubas P."/>
            <person name="Padula M.P."/>
            <person name="Orivel J."/>
            <person name="Dejean A."/>
            <person name="Nicholson G.M."/>
        </authorList>
    </citation>
    <scope>REVIEW</scope>
    <scope>PROTEIN SEQUENCE</scope>
</reference>
<reference key="2">
    <citation type="journal article" date="2016" name="Toxins">
        <title>The biochemical toxin arsenal from ant venoms.</title>
        <authorList>
            <person name="Touchard A."/>
            <person name="Aili S.R."/>
            <person name="Fox E.G."/>
            <person name="Escoubas P."/>
            <person name="Orivel J."/>
            <person name="Nicholson G.M."/>
            <person name="Dejean A."/>
        </authorList>
    </citation>
    <scope>REVIEW</scope>
    <scope>NOMENCLATURE</scope>
</reference>
<feature type="peptide" id="PRO_0000447120" description="U1-poneritoxin-Ni1b">
    <location>
        <begin position="1"/>
        <end position="26"/>
    </location>
</feature>
<accession>P0DSM5</accession>
<protein>
    <recommendedName>
        <fullName evidence="3">U1-poneritoxin-Ni1b</fullName>
        <shortName evidence="3">U1-PONTX-Ni1b</shortName>
    </recommendedName>
    <alternativeName>
        <fullName evidence="4">Poneratoxin</fullName>
    </alternativeName>
    <alternativeName>
        <fullName evidence="2">Ponericin Pi II2</fullName>
    </alternativeName>
</protein>
<comment type="function">
    <text evidence="1">Has a broad spectrum of activity against both Gram-positive and Gram-negative bacteria and S.cerevisiae. Has insecticidal and hemolytic activities. May act by disrupting the integrity of the bacterial cell membrane.</text>
</comment>
<comment type="subcellular location">
    <subcellularLocation>
        <location evidence="5">Secreted</location>
    </subcellularLocation>
    <subcellularLocation>
        <location>Target cell membrane</location>
    </subcellularLocation>
</comment>
<comment type="tissue specificity">
    <text evidence="5">Expressed by the venom gland.</text>
</comment>
<comment type="similarity">
    <text evidence="4">Belongs to the non-disulfide-bridged peptide (NDBP) superfamily. Medium-length antimicrobial peptide (group 3) family. Ponericin-W subfamily.</text>
</comment>